<feature type="chain" id="PRO_1000212475" description="ATP-dependent RNA helicase RhlB">
    <location>
        <begin position="1"/>
        <end position="421"/>
    </location>
</feature>
<feature type="domain" description="Helicase ATP-binding" evidence="1">
    <location>
        <begin position="40"/>
        <end position="219"/>
    </location>
</feature>
<feature type="domain" description="Helicase C-terminal" evidence="1">
    <location>
        <begin position="245"/>
        <end position="390"/>
    </location>
</feature>
<feature type="region of interest" description="Disordered" evidence="2">
    <location>
        <begin position="392"/>
        <end position="421"/>
    </location>
</feature>
<feature type="short sequence motif" description="Q motif">
    <location>
        <begin position="9"/>
        <end position="37"/>
    </location>
</feature>
<feature type="short sequence motif" description="DEAD box">
    <location>
        <begin position="165"/>
        <end position="168"/>
    </location>
</feature>
<feature type="compositionally biased region" description="Low complexity" evidence="2">
    <location>
        <begin position="402"/>
        <end position="414"/>
    </location>
</feature>
<feature type="binding site" evidence="1">
    <location>
        <begin position="53"/>
        <end position="60"/>
    </location>
    <ligand>
        <name>ATP</name>
        <dbReference type="ChEBI" id="CHEBI:30616"/>
    </ligand>
</feature>
<evidence type="ECO:0000255" key="1">
    <source>
        <dbReference type="HAMAP-Rule" id="MF_00661"/>
    </source>
</evidence>
<evidence type="ECO:0000256" key="2">
    <source>
        <dbReference type="SAM" id="MobiDB-lite"/>
    </source>
</evidence>
<keyword id="KW-0067">ATP-binding</keyword>
<keyword id="KW-0963">Cytoplasm</keyword>
<keyword id="KW-0347">Helicase</keyword>
<keyword id="KW-0378">Hydrolase</keyword>
<keyword id="KW-0547">Nucleotide-binding</keyword>
<keyword id="KW-0694">RNA-binding</keyword>
<reference key="1">
    <citation type="journal article" date="2009" name="J. Bacteriol.">
        <title>Genomic sequencing reveals regulatory mutations and recombinational events in the widely used MC4100 lineage of Escherichia coli K-12.</title>
        <authorList>
            <person name="Ferenci T."/>
            <person name="Zhou Z."/>
            <person name="Betteridge T."/>
            <person name="Ren Y."/>
            <person name="Liu Y."/>
            <person name="Feng L."/>
            <person name="Reeves P.R."/>
            <person name="Wang L."/>
        </authorList>
    </citation>
    <scope>NUCLEOTIDE SEQUENCE [LARGE SCALE GENOMIC DNA]</scope>
    <source>
        <strain>K12 / MC4100 / BW2952</strain>
    </source>
</reference>
<dbReference type="EC" id="3.6.4.13" evidence="1"/>
<dbReference type="EMBL" id="CP001396">
    <property type="protein sequence ID" value="ACR62044.1"/>
    <property type="molecule type" value="Genomic_DNA"/>
</dbReference>
<dbReference type="RefSeq" id="WP_000047499.1">
    <property type="nucleotide sequence ID" value="NC_012759.1"/>
</dbReference>
<dbReference type="SMR" id="C4ZZ48"/>
<dbReference type="GeneID" id="93778164"/>
<dbReference type="KEGG" id="ebw:BWG_3463"/>
<dbReference type="HOGENOM" id="CLU_003041_1_3_6"/>
<dbReference type="GO" id="GO:0005829">
    <property type="term" value="C:cytosol"/>
    <property type="evidence" value="ECO:0007669"/>
    <property type="project" value="TreeGrafter"/>
</dbReference>
<dbReference type="GO" id="GO:0005524">
    <property type="term" value="F:ATP binding"/>
    <property type="evidence" value="ECO:0007669"/>
    <property type="project" value="UniProtKB-UniRule"/>
</dbReference>
<dbReference type="GO" id="GO:0016887">
    <property type="term" value="F:ATP hydrolysis activity"/>
    <property type="evidence" value="ECO:0007669"/>
    <property type="project" value="RHEA"/>
</dbReference>
<dbReference type="GO" id="GO:0003723">
    <property type="term" value="F:RNA binding"/>
    <property type="evidence" value="ECO:0007669"/>
    <property type="project" value="UniProtKB-UniRule"/>
</dbReference>
<dbReference type="GO" id="GO:0003724">
    <property type="term" value="F:RNA helicase activity"/>
    <property type="evidence" value="ECO:0007669"/>
    <property type="project" value="UniProtKB-UniRule"/>
</dbReference>
<dbReference type="GO" id="GO:0006401">
    <property type="term" value="P:RNA catabolic process"/>
    <property type="evidence" value="ECO:0007669"/>
    <property type="project" value="UniProtKB-UniRule"/>
</dbReference>
<dbReference type="CDD" id="cd00268">
    <property type="entry name" value="DEADc"/>
    <property type="match status" value="1"/>
</dbReference>
<dbReference type="CDD" id="cd18787">
    <property type="entry name" value="SF2_C_DEAD"/>
    <property type="match status" value="1"/>
</dbReference>
<dbReference type="FunFam" id="3.40.50.300:FF:000008">
    <property type="entry name" value="ATP-dependent RNA helicase RhlB"/>
    <property type="match status" value="1"/>
</dbReference>
<dbReference type="FunFam" id="3.40.50.300:FF:000312">
    <property type="entry name" value="ATP-dependent RNA helicase RhlB"/>
    <property type="match status" value="1"/>
</dbReference>
<dbReference type="Gene3D" id="3.40.50.300">
    <property type="entry name" value="P-loop containing nucleotide triphosphate hydrolases"/>
    <property type="match status" value="2"/>
</dbReference>
<dbReference type="HAMAP" id="MF_00661">
    <property type="entry name" value="DEAD_helicase_RhlB"/>
    <property type="match status" value="1"/>
</dbReference>
<dbReference type="InterPro" id="IPR011545">
    <property type="entry name" value="DEAD/DEAH_box_helicase_dom"/>
</dbReference>
<dbReference type="InterPro" id="IPR050079">
    <property type="entry name" value="DEAD_box_RNA_helicase"/>
</dbReference>
<dbReference type="InterPro" id="IPR014001">
    <property type="entry name" value="Helicase_ATP-bd"/>
</dbReference>
<dbReference type="InterPro" id="IPR001650">
    <property type="entry name" value="Helicase_C-like"/>
</dbReference>
<dbReference type="InterPro" id="IPR027417">
    <property type="entry name" value="P-loop_NTPase"/>
</dbReference>
<dbReference type="InterPro" id="IPR000629">
    <property type="entry name" value="RNA-helicase_DEAD-box_CS"/>
</dbReference>
<dbReference type="InterPro" id="IPR023554">
    <property type="entry name" value="RNA_helicase_ATP-dep_RhlB"/>
</dbReference>
<dbReference type="InterPro" id="IPR014014">
    <property type="entry name" value="RNA_helicase_DEAD_Q_motif"/>
</dbReference>
<dbReference type="NCBIfam" id="NF003419">
    <property type="entry name" value="PRK04837.1"/>
    <property type="match status" value="1"/>
</dbReference>
<dbReference type="PANTHER" id="PTHR47959:SF10">
    <property type="entry name" value="ATP-DEPENDENT RNA HELICASE RHLB"/>
    <property type="match status" value="1"/>
</dbReference>
<dbReference type="PANTHER" id="PTHR47959">
    <property type="entry name" value="ATP-DEPENDENT RNA HELICASE RHLE-RELATED"/>
    <property type="match status" value="1"/>
</dbReference>
<dbReference type="Pfam" id="PF00270">
    <property type="entry name" value="DEAD"/>
    <property type="match status" value="1"/>
</dbReference>
<dbReference type="Pfam" id="PF00271">
    <property type="entry name" value="Helicase_C"/>
    <property type="match status" value="1"/>
</dbReference>
<dbReference type="SMART" id="SM00487">
    <property type="entry name" value="DEXDc"/>
    <property type="match status" value="1"/>
</dbReference>
<dbReference type="SMART" id="SM00490">
    <property type="entry name" value="HELICc"/>
    <property type="match status" value="1"/>
</dbReference>
<dbReference type="SUPFAM" id="SSF52540">
    <property type="entry name" value="P-loop containing nucleoside triphosphate hydrolases"/>
    <property type="match status" value="1"/>
</dbReference>
<dbReference type="PROSITE" id="PS00039">
    <property type="entry name" value="DEAD_ATP_HELICASE"/>
    <property type="match status" value="1"/>
</dbReference>
<dbReference type="PROSITE" id="PS51192">
    <property type="entry name" value="HELICASE_ATP_BIND_1"/>
    <property type="match status" value="1"/>
</dbReference>
<dbReference type="PROSITE" id="PS51194">
    <property type="entry name" value="HELICASE_CTER"/>
    <property type="match status" value="1"/>
</dbReference>
<dbReference type="PROSITE" id="PS51195">
    <property type="entry name" value="Q_MOTIF"/>
    <property type="match status" value="1"/>
</dbReference>
<organism>
    <name type="scientific">Escherichia coli (strain K12 / MC4100 / BW2952)</name>
    <dbReference type="NCBI Taxonomy" id="595496"/>
    <lineage>
        <taxon>Bacteria</taxon>
        <taxon>Pseudomonadati</taxon>
        <taxon>Pseudomonadota</taxon>
        <taxon>Gammaproteobacteria</taxon>
        <taxon>Enterobacterales</taxon>
        <taxon>Enterobacteriaceae</taxon>
        <taxon>Escherichia</taxon>
    </lineage>
</organism>
<sequence>MSKTHLTEQKFSDFALHPKVVEALEKKGFHNCTPIQALALPLTLAGRDVAGQAQTGTGKTMAFLTSTFHYLLSHPAIADRKVNQPRALIMAPTRELAVQIHADAEPLAEATGLKLGLAYGGDGYDKQLKVLESGVDILIGTTGRLIDYAKQNHINLGAIQVVVLDEADRMYDLGFIKDIRWLFRRMPPANQRLNMLFSATLSYRVRELAFEQMNNAEYIEVEPEQKTGHRIKEELFYPSNEEKMRLLQTLIEEEWPDRAIIFANTKHRCEEIWGHLAADGHRVGLLTGDVAQKKRLRILDEFTRGDLDILVATDVAARGLHIPAVTHVFNYDLPDDCEDYVHRIGRTGRAGASGHSISLACEEYALNLPAIETYIGHSIPVSKYNPDALMTDLPKPLRLTRPRTGNGPRRTGAPRNRRRSG</sequence>
<accession>C4ZZ48</accession>
<gene>
    <name evidence="1" type="primary">rhlB</name>
    <name type="ordered locus">BWG_3463</name>
</gene>
<comment type="function">
    <text evidence="1">DEAD-box RNA helicase involved in RNA degradation. Has RNA-dependent ATPase activity and unwinds double-stranded RNA.</text>
</comment>
<comment type="catalytic activity">
    <reaction evidence="1">
        <text>ATP + H2O = ADP + phosphate + H(+)</text>
        <dbReference type="Rhea" id="RHEA:13065"/>
        <dbReference type="ChEBI" id="CHEBI:15377"/>
        <dbReference type="ChEBI" id="CHEBI:15378"/>
        <dbReference type="ChEBI" id="CHEBI:30616"/>
        <dbReference type="ChEBI" id="CHEBI:43474"/>
        <dbReference type="ChEBI" id="CHEBI:456216"/>
        <dbReference type="EC" id="3.6.4.13"/>
    </reaction>
</comment>
<comment type="subunit">
    <text evidence="1">Component of the RNA degradosome, which is a multiprotein complex involved in RNA processing and mRNA degradation.</text>
</comment>
<comment type="subcellular location">
    <subcellularLocation>
        <location evidence="1">Cytoplasm</location>
    </subcellularLocation>
</comment>
<comment type="similarity">
    <text evidence="1">Belongs to the DEAD box helicase family. RhlB subfamily.</text>
</comment>
<name>RHLB_ECOBW</name>
<proteinExistence type="inferred from homology"/>
<protein>
    <recommendedName>
        <fullName evidence="1">ATP-dependent RNA helicase RhlB</fullName>
        <ecNumber evidence="1">3.6.4.13</ecNumber>
    </recommendedName>
</protein>